<organism>
    <name type="scientific">Protochlamydia amoebophila (strain UWE25)</name>
    <dbReference type="NCBI Taxonomy" id="264201"/>
    <lineage>
        <taxon>Bacteria</taxon>
        <taxon>Pseudomonadati</taxon>
        <taxon>Chlamydiota</taxon>
        <taxon>Chlamydiia</taxon>
        <taxon>Parachlamydiales</taxon>
        <taxon>Parachlamydiaceae</taxon>
        <taxon>Candidatus Protochlamydia</taxon>
    </lineage>
</organism>
<proteinExistence type="inferred from homology"/>
<reference key="1">
    <citation type="journal article" date="2004" name="Science">
        <title>Illuminating the evolutionary history of chlamydiae.</title>
        <authorList>
            <person name="Horn M."/>
            <person name="Collingro A."/>
            <person name="Schmitz-Esser S."/>
            <person name="Beier C.L."/>
            <person name="Purkhold U."/>
            <person name="Fartmann B."/>
            <person name="Brandt P."/>
            <person name="Nyakatura G.J."/>
            <person name="Droege M."/>
            <person name="Frishman D."/>
            <person name="Rattei T."/>
            <person name="Mewes H.-W."/>
            <person name="Wagner M."/>
        </authorList>
    </citation>
    <scope>NUCLEOTIDE SEQUENCE [LARGE SCALE GENOMIC DNA]</scope>
    <source>
        <strain>UWE25</strain>
    </source>
</reference>
<keyword id="KW-0067">ATP-binding</keyword>
<keyword id="KW-0143">Chaperone</keyword>
<keyword id="KW-0963">Cytoplasm</keyword>
<keyword id="KW-0413">Isomerase</keyword>
<keyword id="KW-0547">Nucleotide-binding</keyword>
<keyword id="KW-1185">Reference proteome</keyword>
<gene>
    <name evidence="1" type="primary">groEL3</name>
    <name evidence="1" type="synonym">groL3</name>
    <name type="ordered locus">pc1259</name>
</gene>
<dbReference type="EC" id="5.6.1.7" evidence="1"/>
<dbReference type="EMBL" id="BX908798">
    <property type="protein sequence ID" value="CAF23983.1"/>
    <property type="molecule type" value="Genomic_DNA"/>
</dbReference>
<dbReference type="RefSeq" id="WP_011175809.1">
    <property type="nucleotide sequence ID" value="NC_005861.2"/>
</dbReference>
<dbReference type="SMR" id="Q6MBR6"/>
<dbReference type="STRING" id="264201.pc1259"/>
<dbReference type="KEGG" id="pcu:PC_RS06075"/>
<dbReference type="eggNOG" id="COG0459">
    <property type="taxonomic scope" value="Bacteria"/>
</dbReference>
<dbReference type="HOGENOM" id="CLU_016503_3_0_0"/>
<dbReference type="OrthoDB" id="9766614at2"/>
<dbReference type="Proteomes" id="UP000000529">
    <property type="component" value="Chromosome"/>
</dbReference>
<dbReference type="GO" id="GO:0005737">
    <property type="term" value="C:cytoplasm"/>
    <property type="evidence" value="ECO:0007669"/>
    <property type="project" value="UniProtKB-SubCell"/>
</dbReference>
<dbReference type="GO" id="GO:0005524">
    <property type="term" value="F:ATP binding"/>
    <property type="evidence" value="ECO:0007669"/>
    <property type="project" value="UniProtKB-UniRule"/>
</dbReference>
<dbReference type="GO" id="GO:0140662">
    <property type="term" value="F:ATP-dependent protein folding chaperone"/>
    <property type="evidence" value="ECO:0007669"/>
    <property type="project" value="InterPro"/>
</dbReference>
<dbReference type="GO" id="GO:0016853">
    <property type="term" value="F:isomerase activity"/>
    <property type="evidence" value="ECO:0007669"/>
    <property type="project" value="UniProtKB-KW"/>
</dbReference>
<dbReference type="GO" id="GO:0051082">
    <property type="term" value="F:unfolded protein binding"/>
    <property type="evidence" value="ECO:0007669"/>
    <property type="project" value="UniProtKB-UniRule"/>
</dbReference>
<dbReference type="GO" id="GO:0042026">
    <property type="term" value="P:protein refolding"/>
    <property type="evidence" value="ECO:0007669"/>
    <property type="project" value="UniProtKB-UniRule"/>
</dbReference>
<dbReference type="CDD" id="cd03344">
    <property type="entry name" value="GroEL"/>
    <property type="match status" value="1"/>
</dbReference>
<dbReference type="FunFam" id="3.50.7.10:FF:000001">
    <property type="entry name" value="60 kDa chaperonin"/>
    <property type="match status" value="1"/>
</dbReference>
<dbReference type="Gene3D" id="3.50.7.10">
    <property type="entry name" value="GroEL"/>
    <property type="match status" value="1"/>
</dbReference>
<dbReference type="Gene3D" id="1.10.560.10">
    <property type="entry name" value="GroEL-like equatorial domain"/>
    <property type="match status" value="1"/>
</dbReference>
<dbReference type="Gene3D" id="3.30.260.10">
    <property type="entry name" value="TCP-1-like chaperonin intermediate domain"/>
    <property type="match status" value="1"/>
</dbReference>
<dbReference type="HAMAP" id="MF_00600">
    <property type="entry name" value="CH60"/>
    <property type="match status" value="1"/>
</dbReference>
<dbReference type="InterPro" id="IPR001844">
    <property type="entry name" value="Cpn60/GroEL"/>
</dbReference>
<dbReference type="InterPro" id="IPR002423">
    <property type="entry name" value="Cpn60/GroEL/TCP-1"/>
</dbReference>
<dbReference type="InterPro" id="IPR027409">
    <property type="entry name" value="GroEL-like_apical_dom_sf"/>
</dbReference>
<dbReference type="InterPro" id="IPR027413">
    <property type="entry name" value="GROEL-like_equatorial_sf"/>
</dbReference>
<dbReference type="InterPro" id="IPR027410">
    <property type="entry name" value="TCP-1-like_intermed_sf"/>
</dbReference>
<dbReference type="NCBIfam" id="TIGR02348">
    <property type="entry name" value="GroEL"/>
    <property type="match status" value="1"/>
</dbReference>
<dbReference type="NCBIfam" id="NF000592">
    <property type="entry name" value="PRK00013.1"/>
    <property type="match status" value="1"/>
</dbReference>
<dbReference type="NCBIfam" id="NF009487">
    <property type="entry name" value="PRK12849.1"/>
    <property type="match status" value="1"/>
</dbReference>
<dbReference type="NCBIfam" id="NF009488">
    <property type="entry name" value="PRK12850.1"/>
    <property type="match status" value="1"/>
</dbReference>
<dbReference type="NCBIfam" id="NF009489">
    <property type="entry name" value="PRK12851.1"/>
    <property type="match status" value="1"/>
</dbReference>
<dbReference type="PANTHER" id="PTHR45633">
    <property type="entry name" value="60 KDA HEAT SHOCK PROTEIN, MITOCHONDRIAL"/>
    <property type="match status" value="1"/>
</dbReference>
<dbReference type="Pfam" id="PF00118">
    <property type="entry name" value="Cpn60_TCP1"/>
    <property type="match status" value="1"/>
</dbReference>
<dbReference type="PRINTS" id="PR00298">
    <property type="entry name" value="CHAPERONIN60"/>
</dbReference>
<dbReference type="SUPFAM" id="SSF52029">
    <property type="entry name" value="GroEL apical domain-like"/>
    <property type="match status" value="1"/>
</dbReference>
<dbReference type="SUPFAM" id="SSF48592">
    <property type="entry name" value="GroEL equatorial domain-like"/>
    <property type="match status" value="1"/>
</dbReference>
<dbReference type="SUPFAM" id="SSF54849">
    <property type="entry name" value="GroEL-intermediate domain like"/>
    <property type="match status" value="2"/>
</dbReference>
<comment type="function">
    <text evidence="1">Together with its co-chaperonin GroES, plays an essential role in assisting protein folding. The GroEL-GroES system forms a nano-cage that allows encapsulation of the non-native substrate proteins and provides a physical environment optimized to promote and accelerate protein folding.</text>
</comment>
<comment type="catalytic activity">
    <reaction evidence="1">
        <text>ATP + H2O + a folded polypeptide = ADP + phosphate + an unfolded polypeptide.</text>
        <dbReference type="EC" id="5.6.1.7"/>
    </reaction>
</comment>
<comment type="subunit">
    <text evidence="1">Forms a cylinder of 14 subunits composed of two heptameric rings stacked back-to-back. Interacts with the co-chaperonin GroES.</text>
</comment>
<comment type="subcellular location">
    <subcellularLocation>
        <location evidence="1">Cytoplasm</location>
    </subcellularLocation>
</comment>
<comment type="similarity">
    <text evidence="1">Belongs to the chaperonin (HSP60) family.</text>
</comment>
<feature type="chain" id="PRO_0000063473" description="Chaperonin GroEL 3">
    <location>
        <begin position="1"/>
        <end position="534"/>
    </location>
</feature>
<feature type="binding site" evidence="1">
    <location>
        <begin position="31"/>
        <end position="34"/>
    </location>
    <ligand>
        <name>ATP</name>
        <dbReference type="ChEBI" id="CHEBI:30616"/>
    </ligand>
</feature>
<feature type="binding site" evidence="1">
    <location>
        <position position="416"/>
    </location>
    <ligand>
        <name>ATP</name>
        <dbReference type="ChEBI" id="CHEBI:30616"/>
    </ligand>
</feature>
<feature type="binding site" evidence="1">
    <location>
        <begin position="479"/>
        <end position="481"/>
    </location>
    <ligand>
        <name>ATP</name>
        <dbReference type="ChEBI" id="CHEBI:30616"/>
    </ligand>
</feature>
<feature type="binding site" evidence="1">
    <location>
        <position position="495"/>
    </location>
    <ligand>
        <name>ATP</name>
        <dbReference type="ChEBI" id="CHEBI:30616"/>
    </ligand>
</feature>
<protein>
    <recommendedName>
        <fullName evidence="1">Chaperonin GroEL 3</fullName>
        <ecNumber evidence="1">5.6.1.7</ecNumber>
    </recommendedName>
    <alternativeName>
        <fullName evidence="1">60 kDa chaperonin 3</fullName>
    </alternativeName>
    <alternativeName>
        <fullName evidence="1">Chaperonin-60 3</fullName>
        <shortName evidence="1">Cpn60 3</shortName>
    </alternativeName>
</protein>
<name>CH603_PARUW</name>
<accession>Q6MBR6</accession>
<sequence length="534" mass="56480">MSIPKEIIFEEEAREFLLKGIKKLADVVAFTLGPKGRNVGLEKSWGAPTITNDGASIIRDIQLEDKYENMGVAMAKEVVQKIKEKCGDGTTSGALLLRSLVEAGIKNISSGASPIGIKRGMDKAVEVVVKAIEKAAIPVKTKQETRNVAVVSASGNQEIGELIAEAMEKVSNSGAITIEEGKGTETSIEVVKGMKFDRGYVSPYLCTNLEKMIVEMDHAQILLVDKKISSIHELLPVLQATAASGRELLIIAEDIDGDALSTLVVNKLRGTLKVAAVKAPGFGDRRKAMLQDIATLTAATVVSEELGISLKEIPATALGSAEKVTVTKESTTIVGGTGAQEDIAARIKQIDAEINLAQSSYDKEKLEERRAKLSGGVAVIRVGAATETEMKQKKQMFDDSLNSTKAALEEGIVPGGGVALLNASKTLGQLKLEGDEAVGAKIVLQACETPIKQIVQNTGFDGSVVLNEVLNSPANFGFNALTEKVEDLIAAGVIDPAKVIKNTLTYAASTAGIVLLSEALIADADDEEEENSTK</sequence>
<evidence type="ECO:0000255" key="1">
    <source>
        <dbReference type="HAMAP-Rule" id="MF_00600"/>
    </source>
</evidence>